<evidence type="ECO:0000255" key="1"/>
<evidence type="ECO:0000256" key="2">
    <source>
        <dbReference type="SAM" id="MobiDB-lite"/>
    </source>
</evidence>
<evidence type="ECO:0000305" key="3"/>
<proteinExistence type="inferred from homology"/>
<organism>
    <name type="scientific">Arabidopsis thaliana</name>
    <name type="common">Mouse-ear cress</name>
    <dbReference type="NCBI Taxonomy" id="3702"/>
    <lineage>
        <taxon>Eukaryota</taxon>
        <taxon>Viridiplantae</taxon>
        <taxon>Streptophyta</taxon>
        <taxon>Embryophyta</taxon>
        <taxon>Tracheophyta</taxon>
        <taxon>Spermatophyta</taxon>
        <taxon>Magnoliopsida</taxon>
        <taxon>eudicotyledons</taxon>
        <taxon>Gunneridae</taxon>
        <taxon>Pentapetalae</taxon>
        <taxon>rosids</taxon>
        <taxon>malvids</taxon>
        <taxon>Brassicales</taxon>
        <taxon>Brassicaceae</taxon>
        <taxon>Camelineae</taxon>
        <taxon>Arabidopsis</taxon>
    </lineage>
</organism>
<reference key="1">
    <citation type="journal article" date="2000" name="Nature">
        <title>Sequence and analysis of chromosome 1 of the plant Arabidopsis thaliana.</title>
        <authorList>
            <person name="Theologis A."/>
            <person name="Ecker J.R."/>
            <person name="Palm C.J."/>
            <person name="Federspiel N.A."/>
            <person name="Kaul S."/>
            <person name="White O."/>
            <person name="Alonso J."/>
            <person name="Altafi H."/>
            <person name="Araujo R."/>
            <person name="Bowman C.L."/>
            <person name="Brooks S.Y."/>
            <person name="Buehler E."/>
            <person name="Chan A."/>
            <person name="Chao Q."/>
            <person name="Chen H."/>
            <person name="Cheuk R.F."/>
            <person name="Chin C.W."/>
            <person name="Chung M.K."/>
            <person name="Conn L."/>
            <person name="Conway A.B."/>
            <person name="Conway A.R."/>
            <person name="Creasy T.H."/>
            <person name="Dewar K."/>
            <person name="Dunn P."/>
            <person name="Etgu P."/>
            <person name="Feldblyum T.V."/>
            <person name="Feng J.-D."/>
            <person name="Fong B."/>
            <person name="Fujii C.Y."/>
            <person name="Gill J.E."/>
            <person name="Goldsmith A.D."/>
            <person name="Haas B."/>
            <person name="Hansen N.F."/>
            <person name="Hughes B."/>
            <person name="Huizar L."/>
            <person name="Hunter J.L."/>
            <person name="Jenkins J."/>
            <person name="Johnson-Hopson C."/>
            <person name="Khan S."/>
            <person name="Khaykin E."/>
            <person name="Kim C.J."/>
            <person name="Koo H.L."/>
            <person name="Kremenetskaia I."/>
            <person name="Kurtz D.B."/>
            <person name="Kwan A."/>
            <person name="Lam B."/>
            <person name="Langin-Hooper S."/>
            <person name="Lee A."/>
            <person name="Lee J.M."/>
            <person name="Lenz C.A."/>
            <person name="Li J.H."/>
            <person name="Li Y.-P."/>
            <person name="Lin X."/>
            <person name="Liu S.X."/>
            <person name="Liu Z.A."/>
            <person name="Luros J.S."/>
            <person name="Maiti R."/>
            <person name="Marziali A."/>
            <person name="Militscher J."/>
            <person name="Miranda M."/>
            <person name="Nguyen M."/>
            <person name="Nierman W.C."/>
            <person name="Osborne B.I."/>
            <person name="Pai G."/>
            <person name="Peterson J."/>
            <person name="Pham P.K."/>
            <person name="Rizzo M."/>
            <person name="Rooney T."/>
            <person name="Rowley D."/>
            <person name="Sakano H."/>
            <person name="Salzberg S.L."/>
            <person name="Schwartz J.R."/>
            <person name="Shinn P."/>
            <person name="Southwick A.M."/>
            <person name="Sun H."/>
            <person name="Tallon L.J."/>
            <person name="Tambunga G."/>
            <person name="Toriumi M.J."/>
            <person name="Town C.D."/>
            <person name="Utterback T."/>
            <person name="Van Aken S."/>
            <person name="Vaysberg M."/>
            <person name="Vysotskaia V.S."/>
            <person name="Walker M."/>
            <person name="Wu D."/>
            <person name="Yu G."/>
            <person name="Fraser C.M."/>
            <person name="Venter J.C."/>
            <person name="Davis R.W."/>
        </authorList>
    </citation>
    <scope>NUCLEOTIDE SEQUENCE [LARGE SCALE GENOMIC DNA]</scope>
    <source>
        <strain>cv. Columbia</strain>
    </source>
</reference>
<reference key="2">
    <citation type="journal article" date="2017" name="Plant J.">
        <title>Araport11: a complete reannotation of the Arabidopsis thaliana reference genome.</title>
        <authorList>
            <person name="Cheng C.Y."/>
            <person name="Krishnakumar V."/>
            <person name="Chan A.P."/>
            <person name="Thibaud-Nissen F."/>
            <person name="Schobel S."/>
            <person name="Town C.D."/>
        </authorList>
    </citation>
    <scope>GENOME REANNOTATION</scope>
    <source>
        <strain>cv. Columbia</strain>
    </source>
</reference>
<reference key="3">
    <citation type="journal article" date="2000" name="Plant Physiol.">
        <title>The cellulose synthase superfamily.</title>
        <authorList>
            <person name="Richmond T.A."/>
            <person name="Somerville C.R."/>
        </authorList>
    </citation>
    <scope>GENE FAMILY</scope>
    <scope>NOMENCLATURE</scope>
</reference>
<protein>
    <recommendedName>
        <fullName>Putative cellulose synthase-like protein D6</fullName>
        <shortName>AtCslD6</shortName>
        <ecNumber>2.4.1.-</ecNumber>
    </recommendedName>
</protein>
<keyword id="KW-0961">Cell wall biogenesis/degradation</keyword>
<keyword id="KW-0328">Glycosyltransferase</keyword>
<keyword id="KW-0333">Golgi apparatus</keyword>
<keyword id="KW-0472">Membrane</keyword>
<keyword id="KW-1185">Reference proteome</keyword>
<keyword id="KW-0808">Transferase</keyword>
<keyword id="KW-0812">Transmembrane</keyword>
<keyword id="KW-1133">Transmembrane helix</keyword>
<dbReference type="EC" id="2.4.1.-"/>
<dbReference type="EMBL" id="AC084165">
    <property type="protein sequence ID" value="AAG23436.1"/>
    <property type="molecule type" value="Genomic_DNA"/>
</dbReference>
<dbReference type="EMBL" id="CP002684">
    <property type="protein sequence ID" value="AEE31444.1"/>
    <property type="molecule type" value="Genomic_DNA"/>
</dbReference>
<dbReference type="EMBL" id="CP002684">
    <property type="protein sequence ID" value="ANM59314.1"/>
    <property type="molecule type" value="Genomic_DNA"/>
</dbReference>
<dbReference type="PIR" id="C86446">
    <property type="entry name" value="C86446"/>
</dbReference>
<dbReference type="RefSeq" id="NP_001321681.1">
    <property type="nucleotide sequence ID" value="NM_001332996.1"/>
</dbReference>
<dbReference type="RefSeq" id="NP_174497.1">
    <property type="nucleotide sequence ID" value="NM_102951.2"/>
</dbReference>
<dbReference type="SMR" id="Q9FVR3"/>
<dbReference type="STRING" id="3702.Q9FVR3"/>
<dbReference type="CAZy" id="GT2">
    <property type="family name" value="Glycosyltransferase Family 2"/>
</dbReference>
<dbReference type="GlyGen" id="Q9FVR3">
    <property type="glycosylation" value="1 site"/>
</dbReference>
<dbReference type="iPTMnet" id="Q9FVR3"/>
<dbReference type="PaxDb" id="3702-AT1G32180.1"/>
<dbReference type="EnsemblPlants" id="AT1G32180.1">
    <property type="protein sequence ID" value="AT1G32180.1"/>
    <property type="gene ID" value="AT1G32180"/>
</dbReference>
<dbReference type="EnsemblPlants" id="AT1G32180.2">
    <property type="protein sequence ID" value="AT1G32180.2"/>
    <property type="gene ID" value="AT1G32180"/>
</dbReference>
<dbReference type="GeneID" id="840110"/>
<dbReference type="Gramene" id="AT1G32180.1">
    <property type="protein sequence ID" value="AT1G32180.1"/>
    <property type="gene ID" value="AT1G32180"/>
</dbReference>
<dbReference type="Gramene" id="AT1G32180.2">
    <property type="protein sequence ID" value="AT1G32180.2"/>
    <property type="gene ID" value="AT1G32180"/>
</dbReference>
<dbReference type="KEGG" id="ath:AT1G32180"/>
<dbReference type="Araport" id="AT1G32180"/>
<dbReference type="TAIR" id="AT1G32180">
    <property type="gene designation" value="CSLD6"/>
</dbReference>
<dbReference type="eggNOG" id="ENOG502QU14">
    <property type="taxonomic scope" value="Eukaryota"/>
</dbReference>
<dbReference type="HOGENOM" id="CLU_001418_3_1_1"/>
<dbReference type="InParanoid" id="Q9FVR3"/>
<dbReference type="OMA" id="FAVCRTV"/>
<dbReference type="PhylomeDB" id="Q9FVR3"/>
<dbReference type="BioCyc" id="ARA:AT1G32180-MONOMER"/>
<dbReference type="PRO" id="PR:Q9FVR3"/>
<dbReference type="Proteomes" id="UP000006548">
    <property type="component" value="Chromosome 1"/>
</dbReference>
<dbReference type="ExpressionAtlas" id="Q9FVR3">
    <property type="expression patterns" value="baseline and differential"/>
</dbReference>
<dbReference type="GO" id="GO:0000139">
    <property type="term" value="C:Golgi membrane"/>
    <property type="evidence" value="ECO:0007669"/>
    <property type="project" value="UniProtKB-SubCell"/>
</dbReference>
<dbReference type="GO" id="GO:0016760">
    <property type="term" value="F:cellulose synthase (UDP-forming) activity"/>
    <property type="evidence" value="ECO:0007669"/>
    <property type="project" value="InterPro"/>
</dbReference>
<dbReference type="GO" id="GO:0071555">
    <property type="term" value="P:cell wall organization"/>
    <property type="evidence" value="ECO:0007669"/>
    <property type="project" value="UniProtKB-KW"/>
</dbReference>
<dbReference type="GO" id="GO:0030244">
    <property type="term" value="P:cellulose biosynthetic process"/>
    <property type="evidence" value="ECO:0007669"/>
    <property type="project" value="InterPro"/>
</dbReference>
<dbReference type="FunFam" id="3.90.550.10:FF:000027">
    <property type="entry name" value="Cellulose synthase-like protein D4"/>
    <property type="match status" value="1"/>
</dbReference>
<dbReference type="Gene3D" id="3.90.550.10">
    <property type="entry name" value="Spore Coat Polysaccharide Biosynthesis Protein SpsA, Chain A"/>
    <property type="match status" value="1"/>
</dbReference>
<dbReference type="InterPro" id="IPR005150">
    <property type="entry name" value="Cellulose_synth"/>
</dbReference>
<dbReference type="InterPro" id="IPR029044">
    <property type="entry name" value="Nucleotide-diphossugar_trans"/>
</dbReference>
<dbReference type="PANTHER" id="PTHR13301">
    <property type="entry name" value="X-BOX TRANSCRIPTION FACTOR-RELATED"/>
    <property type="match status" value="1"/>
</dbReference>
<dbReference type="Pfam" id="PF03552">
    <property type="entry name" value="Cellulose_synt"/>
    <property type="match status" value="1"/>
</dbReference>
<dbReference type="SUPFAM" id="SSF53448">
    <property type="entry name" value="Nucleotide-diphospho-sugar transferases"/>
    <property type="match status" value="1"/>
</dbReference>
<accession>Q9FVR3</accession>
<gene>
    <name type="primary">CSLD6</name>
    <name type="ordered locus">At1g32180</name>
    <name type="ORF">F3C3.4</name>
</gene>
<name>CSLD6_ARATH</name>
<comment type="function">
    <text>Thought to be a Golgi-localized beta-glycan synthase that polymerize the backbones of noncellulosic polysaccharides (hemicelluloses) of plant cell wall.</text>
</comment>
<comment type="subcellular location">
    <subcellularLocation>
        <location evidence="3">Golgi apparatus membrane</location>
        <topology evidence="3">Multi-pass membrane protein</topology>
    </subcellularLocation>
</comment>
<comment type="similarity">
    <text evidence="3">Belongs to the glycosyltransferase 2 family. Plant cellulose synthase-like D subfamily.</text>
</comment>
<feature type="chain" id="PRO_0000319351" description="Putative cellulose synthase-like protein D6">
    <location>
        <begin position="1"/>
        <end position="979"/>
    </location>
</feature>
<feature type="transmembrane region" description="Helical" evidence="1">
    <location>
        <begin position="116"/>
        <end position="136"/>
    </location>
</feature>
<feature type="transmembrane region" description="Helical" evidence="1">
    <location>
        <begin position="147"/>
        <end position="167"/>
    </location>
</feature>
<feature type="transmembrane region" description="Helical" evidence="1">
    <location>
        <begin position="765"/>
        <end position="785"/>
    </location>
</feature>
<feature type="transmembrane region" description="Helical" evidence="1">
    <location>
        <begin position="788"/>
        <end position="808"/>
    </location>
</feature>
<feature type="transmembrane region" description="Helical" evidence="1">
    <location>
        <begin position="837"/>
        <end position="857"/>
    </location>
</feature>
<feature type="transmembrane region" description="Helical" evidence="1">
    <location>
        <begin position="882"/>
        <end position="902"/>
    </location>
</feature>
<feature type="transmembrane region" description="Helical" evidence="1">
    <location>
        <begin position="913"/>
        <end position="933"/>
    </location>
</feature>
<feature type="transmembrane region" description="Helical" evidence="1">
    <location>
        <begin position="946"/>
        <end position="966"/>
    </location>
</feature>
<feature type="region of interest" description="Disordered" evidence="2">
    <location>
        <begin position="1"/>
        <end position="24"/>
    </location>
</feature>
<feature type="compositionally biased region" description="Low complexity" evidence="2">
    <location>
        <begin position="14"/>
        <end position="24"/>
    </location>
</feature>
<feature type="active site" evidence="1">
    <location>
        <position position="247"/>
    </location>
</feature>
<feature type="active site" evidence="1">
    <location>
        <position position="683"/>
    </location>
</feature>
<sequence length="979" mass="109653">MMDGESPLRHPRISHVSNSGSDFGSSSDYNKYLVQIPPTPDNNPGPASLSIVLLEIDSNQESVPSVSGDIVSGSSGKDNEPDLTDVRINVGEEEEDDTLLSKISYSLTRVVKISPIIIALYRILIVVRVVSLALFLFWRIRNPNNKALWLWLLSVICELWFAFSWLLDQIPKLFPVNHATDIEALKATFETPNPDNPTGKSDLPGIDVFVSTADAEKEPPLVTANTILSILSVDYPVEKLSVYISDDGGSLVTFEAIAEAASFAKIWVPFCRKHKIEPRNPESYFGLKRDPYKDKVRHDFVRERRYVKRAYDEFKVRVNALPHSIRRRSDAFNSKEEIKALEKWKHWKVKVEEDQIKEPRPALVAPKATWMSDGTHWPGTWAVSGPHHSRGDHASVIQVLLDPPGDEPVEGKGGEGRALDLEGVDIRLPMLVYVSREKRPGYDHNKKAGAMNALVRASAIMSNGPFILNLDCDHYVYNSRAFRDGICFMMDHDGDRVSYVQFPQRFEGIDPSDRYANKNTVFFDINLRALDGIQGPMYVGTGCLFRRTALYGFNPPDVFVVEEEPSGSYCFPLIKKRSPATVASEPEYYTDEEDRFDIGLIRKQFGSSSMLVNSVKVAEFEGRPLATVHSSRLGRPPGSLTGSRKPLDFATVNEAVNVISCWYEDKTEWGFNVGWIYGSVTEDVVTGFRMHEKGWRSFYCVTEPDAFRGSAPINLTDRLHQVLRWATGSVEIFFSRNNAIFAGPKLKLLQRIAYLNVGIYPFTSIFILTYCFLPPLSLFSGHFVVETLTGSFLIYLLIITLSLCGLAVLEVKWSGISLEEWWRNEQFWLIGGTSAHLVAVLQGILKVIAGVEISFTLTSKSSTGGDDEDDEFADLYLFKWTALMIPPLTIIILNIVAILFAVCRTVFSANPQWSNLLGGTFFASWVLLHMYPFAKGLMGRGGKTPTVVYVWSGLIAICLSLLYITIKNSEIDGGSFMLV</sequence>